<sequence>MSDPRPSQAEKHKLGRAAAKLKDPSRTMQADDYFARKFKAINGSMGPATLNTSSSSEGGGGGGGPANGTPAVPKMGVRARVSEWPPKKDCSKDLACKTLWESRSQSSYESVTSIIQNGQNDQGDRQPEEQLDLDFVEAKYTIGDIFVHSPQRGLHPIRQRSNSDITISDIDTEDVLDQHAVNPNTGAALHREYGSTSSIDRQGLSGENVFAMLRGYRIESYDPKVTGSFGFPDFFPCDTAISPSLHAAAQISRGEFVRISGLDYMDGGLLMGRDRDKPFKRRLKSESVETSLFRKLRAVKSEHETFKFTSDLEEGRLDRGIRPWSCQRCFAHYDVQSILFNINEAMATRASVGKRKNITTGASAASQTPVPVGPAGGCESPLGSKEDLNSKENPDADEGDGKSNDLVLSCPYFRNETGGEGDRRIALSRANSASFSSGESCSFESSLSSHCTNAGVSVLEVPRESQPIHREKVKRYIIEHVDLGAYYYRKFFYGKEHQNYFGIDENLGPVAVSIRREKVEDPREKEGSQFNYRVAFRTSELTTLRGAILEDAVPSTARHGTARGLPLKEVLEYVIPELSIQCLRQAANSPKVPEQLLKLDEQGLSFQHKIGILYCRAGQSTEEEMYNNETAGPAFEEFLDLLGQRVRLKGFSKYRAQLDNKTDSTGTHSLYTTYKDFELMFHVSTLLPYMPNNRQQLLRKRHIGNDIVTIVFQEPGALPFTPKNIRSHFQHVFVIVKVHNPCTENVCYSVGVSRSKDVPPFGPPIPKGVTFPKSAVFRDFLLAKVINAENAAHKSEKFRAMATRTRQEYLKDLAENFVTTATVDTSAKFSFITLGAKKKERVKPRKDAHLFSIGAIMWHVVARDFGQSADIECLLGISNEFIMLIEKDSKNVVFNCSCRDVIGWTSGLVSIKAFYERGECLLLSSVDNRSEDIREIVQRLLIVTRGCETVEMTLRRNGLGQLGFHVNFEGIVADVEPFGFAWKAGLRQGSRLVEICKVAVATLTHEQMIDLLRTSVTVKVVIIQPHEDGSPRRGCSELCRIPMVEYKLDSEGTPCEYKTPFRRNTTWHRVPTPALQPVSRASPVPGTPDRLQCQPLLQQAQAAIPRSTSFDRKLPDGTRSSPSNQSSSSDPGPGGSGPWRPQVGYDGCPSPLLLEHQGPGSVECDGTGEQEDLLEGGRLPETKWHGPPSKVLSSYKERVLQKDGSCKESPNKLSHIGDKSCSSHSSSNTLSSNTSSNSDDKHFGSGDLMDPELLGLTYIKGASTDSGIDTTPCMPATILGPVHLTGSRSLMHSRAEQWADAADVSVADDDPAKMYALHGYASAISSSAADGSMGDLSEVSSHSSGSQHSGSPSAHCSKSTGSLDSSKVYIVTHGGGQQAPGAVTKPYHRQGAANKYVIGWKKSEGSPPPEEPEVTECPRIYGEMDIMSTATQHPAVVGDSVSETQHVLSKDDFLKLMLPDSPLVEEGRRKFSFYGNVSPRRSLYRTLSDESVCSNRRGSSFASSRSSILEQALPNDILFSTTPPYHSTLPPRTHPAPSMGSLRNEFWFSDGSLSDKSKCADPGLMPLPDTAAGLDWSHLVDAARAFEGLDSDEELGLLCHHASYLDQRVASFCTLTDLQHGQELEGAPELSLCVDPTSGKEFMDTPGERSPSTLTGKVNQLELILRQLQTDLRKEKQDKAVLQAEVQHLRQDNMRLQEESQTATAQLRKFTEWFFSTIDKKA</sequence>
<feature type="chain" id="PRO_0000056750" description="Signal-induced proliferation-associated 1-like protein 2">
    <location>
        <begin position="1"/>
        <end position="1722"/>
    </location>
</feature>
<feature type="domain" description="Rap-GAP" evidence="5">
    <location>
        <begin position="596"/>
        <end position="813"/>
    </location>
</feature>
<feature type="domain" description="PDZ" evidence="4">
    <location>
        <begin position="951"/>
        <end position="1027"/>
    </location>
</feature>
<feature type="region of interest" description="Disordered" evidence="6">
    <location>
        <begin position="1"/>
        <end position="29"/>
    </location>
</feature>
<feature type="region of interest" description="Disordered" evidence="6">
    <location>
        <begin position="44"/>
        <end position="72"/>
    </location>
</feature>
<feature type="region of interest" description="Disordered" evidence="6">
    <location>
        <begin position="362"/>
        <end position="405"/>
    </location>
</feature>
<feature type="region of interest" description="Disordered" evidence="6">
    <location>
        <begin position="1068"/>
        <end position="1246"/>
    </location>
</feature>
<feature type="region of interest" description="Disordered" evidence="6">
    <location>
        <begin position="1331"/>
        <end position="1360"/>
    </location>
</feature>
<feature type="coiled-coil region" evidence="3">
    <location>
        <begin position="1652"/>
        <end position="1712"/>
    </location>
</feature>
<feature type="compositionally biased region" description="Gly residues" evidence="6">
    <location>
        <begin position="57"/>
        <end position="66"/>
    </location>
</feature>
<feature type="compositionally biased region" description="Basic and acidic residues" evidence="6">
    <location>
        <begin position="384"/>
        <end position="403"/>
    </location>
</feature>
<feature type="compositionally biased region" description="Low complexity" evidence="6">
    <location>
        <begin position="1091"/>
        <end position="1103"/>
    </location>
</feature>
<feature type="compositionally biased region" description="Low complexity" evidence="6">
    <location>
        <begin position="1120"/>
        <end position="1131"/>
    </location>
</feature>
<feature type="compositionally biased region" description="Basic and acidic residues" evidence="6">
    <location>
        <begin position="1195"/>
        <end position="1218"/>
    </location>
</feature>
<feature type="compositionally biased region" description="Low complexity" evidence="6">
    <location>
        <begin position="1220"/>
        <end position="1237"/>
    </location>
</feature>
<feature type="compositionally biased region" description="Low complexity" evidence="6">
    <location>
        <begin position="1331"/>
        <end position="1355"/>
    </location>
</feature>
<feature type="modified residue" description="Phosphoserine" evidence="2">
    <location>
        <position position="149"/>
    </location>
</feature>
<feature type="modified residue" description="Phosphoserine" evidence="9">
    <location>
        <position position="380"/>
    </location>
</feature>
<feature type="modified residue" description="Phosphoserine" evidence="9">
    <location>
        <position position="384"/>
    </location>
</feature>
<feature type="modified residue" description="Phosphoserine" evidence="2">
    <location>
        <position position="1030"/>
    </location>
</feature>
<feature type="modified residue" description="Phosphoserine" evidence="1">
    <location>
        <position position="1245"/>
    </location>
</feature>
<feature type="modified residue" description="Phosphoserine" evidence="9">
    <location>
        <position position="1461"/>
    </location>
</feature>
<feature type="modified residue" description="Phosphoserine" evidence="9">
    <location>
        <position position="1472"/>
    </location>
</feature>
<feature type="modified residue" description="Phosphoserine" evidence="9">
    <location>
        <position position="1478"/>
    </location>
</feature>
<feature type="modified residue" description="Phosphoserine" evidence="9">
    <location>
        <position position="1488"/>
    </location>
</feature>
<feature type="modified residue" description="Phosphoserine" evidence="9">
    <location>
        <position position="1549"/>
    </location>
</feature>
<feature type="modified residue" description="Phosphoserine" evidence="9">
    <location>
        <position position="1552"/>
    </location>
</feature>
<feature type="modified residue" description="Phosphoserine" evidence="9">
    <location>
        <position position="1591"/>
    </location>
</feature>
<feature type="splice variant" id="VSP_016999" description="In isoform 2." evidence="7">
    <location>
        <begin position="1587"/>
        <end position="1605"/>
    </location>
</feature>
<feature type="sequence conflict" description="In Ref. 3; BAC65783." evidence="8" ref="3">
    <original>G</original>
    <variation>S</variation>
    <location>
        <position position="1361"/>
    </location>
</feature>
<feature type="sequence conflict" description="In Ref. 3; BAC65783." evidence="8" ref="3">
    <original>R</original>
    <variation>Q</variation>
    <location>
        <position position="1649"/>
    </location>
</feature>
<organism>
    <name type="scientific">Mus musculus</name>
    <name type="common">Mouse</name>
    <dbReference type="NCBI Taxonomy" id="10090"/>
    <lineage>
        <taxon>Eukaryota</taxon>
        <taxon>Metazoa</taxon>
        <taxon>Chordata</taxon>
        <taxon>Craniata</taxon>
        <taxon>Vertebrata</taxon>
        <taxon>Euteleostomi</taxon>
        <taxon>Mammalia</taxon>
        <taxon>Eutheria</taxon>
        <taxon>Euarchontoglires</taxon>
        <taxon>Glires</taxon>
        <taxon>Rodentia</taxon>
        <taxon>Myomorpha</taxon>
        <taxon>Muroidea</taxon>
        <taxon>Muridae</taxon>
        <taxon>Murinae</taxon>
        <taxon>Mus</taxon>
        <taxon>Mus</taxon>
    </lineage>
</organism>
<reference key="1">
    <citation type="journal article" date="2009" name="PLoS Biol.">
        <title>Lineage-specific biology revealed by a finished genome assembly of the mouse.</title>
        <authorList>
            <person name="Church D.M."/>
            <person name="Goodstadt L."/>
            <person name="Hillier L.W."/>
            <person name="Zody M.C."/>
            <person name="Goldstein S."/>
            <person name="She X."/>
            <person name="Bult C.J."/>
            <person name="Agarwala R."/>
            <person name="Cherry J.L."/>
            <person name="DiCuccio M."/>
            <person name="Hlavina W."/>
            <person name="Kapustin Y."/>
            <person name="Meric P."/>
            <person name="Maglott D."/>
            <person name="Birtle Z."/>
            <person name="Marques A.C."/>
            <person name="Graves T."/>
            <person name="Zhou S."/>
            <person name="Teague B."/>
            <person name="Potamousis K."/>
            <person name="Churas C."/>
            <person name="Place M."/>
            <person name="Herschleb J."/>
            <person name="Runnheim R."/>
            <person name="Forrest D."/>
            <person name="Amos-Landgraf J."/>
            <person name="Schwartz D.C."/>
            <person name="Cheng Z."/>
            <person name="Lindblad-Toh K."/>
            <person name="Eichler E.E."/>
            <person name="Ponting C.P."/>
        </authorList>
    </citation>
    <scope>NUCLEOTIDE SEQUENCE [LARGE SCALE GENOMIC DNA]</scope>
    <source>
        <strain>C57BL/6J</strain>
    </source>
</reference>
<reference key="2">
    <citation type="journal article" date="2004" name="Genome Res.">
        <title>The status, quality, and expansion of the NIH full-length cDNA project: the Mammalian Gene Collection (MGC).</title>
        <authorList>
            <consortium name="The MGC Project Team"/>
        </authorList>
    </citation>
    <scope>NUCLEOTIDE SEQUENCE [LARGE SCALE MRNA] (ISOFORM 2)</scope>
    <source>
        <strain>C57BL/6J</strain>
        <tissue>Brain</tissue>
    </source>
</reference>
<reference key="3">
    <citation type="journal article" date="2003" name="DNA Res.">
        <title>Prediction of the coding sequences of mouse homologues of KIAA gene: II. The complete nucleotide sequences of 400 mouse KIAA-homologous cDNAs identified by screening of terminal sequences of cDNA clones randomly sampled from size-fractionated libraries.</title>
        <authorList>
            <person name="Okazaki N."/>
            <person name="Kikuno R."/>
            <person name="Ohara R."/>
            <person name="Inamoto S."/>
            <person name="Aizawa H."/>
            <person name="Yuasa S."/>
            <person name="Nakajima D."/>
            <person name="Nagase T."/>
            <person name="Ohara O."/>
            <person name="Koga H."/>
        </authorList>
    </citation>
    <scope>NUCLEOTIDE SEQUENCE [LARGE SCALE MRNA] OF 538-1722 (ISOFORM 1)</scope>
    <source>
        <tissue>Brain</tissue>
    </source>
</reference>
<reference key="4">
    <citation type="journal article" date="2006" name="Mol. Cell. Proteomics">
        <title>Comprehensive identification of phosphorylation sites in postsynaptic density preparations.</title>
        <authorList>
            <person name="Trinidad J.C."/>
            <person name="Specht C.G."/>
            <person name="Thalhammer A."/>
            <person name="Schoepfer R."/>
            <person name="Burlingame A.L."/>
        </authorList>
    </citation>
    <scope>IDENTIFICATION BY MASS SPECTROMETRY [LARGE SCALE ANALYSIS]</scope>
    <source>
        <tissue>Brain</tissue>
    </source>
</reference>
<reference key="5">
    <citation type="journal article" date="2010" name="Cell">
        <title>A tissue-specific atlas of mouse protein phosphorylation and expression.</title>
        <authorList>
            <person name="Huttlin E.L."/>
            <person name="Jedrychowski M.P."/>
            <person name="Elias J.E."/>
            <person name="Goswami T."/>
            <person name="Rad R."/>
            <person name="Beausoleil S.A."/>
            <person name="Villen J."/>
            <person name="Haas W."/>
            <person name="Sowa M.E."/>
            <person name="Gygi S.P."/>
        </authorList>
    </citation>
    <scope>PHOSPHORYLATION [LARGE SCALE ANALYSIS] AT SER-380; SER-384; SER-1461; SER-1472; SER-1478; SER-1488; SER-1549; SER-1552 AND SER-1591</scope>
    <scope>IDENTIFICATION BY MASS SPECTROMETRY [LARGE SCALE ANALYSIS]</scope>
    <source>
        <tissue>Brain</tissue>
        <tissue>Heart</tissue>
        <tissue>Kidney</tissue>
        <tissue>Lung</tissue>
        <tissue>Spleen</tissue>
        <tissue>Testis</tissue>
    </source>
</reference>
<name>SI1L2_MOUSE</name>
<proteinExistence type="evidence at protein level"/>
<evidence type="ECO:0000250" key="1">
    <source>
        <dbReference type="UniProtKB" id="Q5JCS6"/>
    </source>
</evidence>
<evidence type="ECO:0000250" key="2">
    <source>
        <dbReference type="UniProtKB" id="Q9P2F8"/>
    </source>
</evidence>
<evidence type="ECO:0000255" key="3"/>
<evidence type="ECO:0000255" key="4">
    <source>
        <dbReference type="PROSITE-ProRule" id="PRU00143"/>
    </source>
</evidence>
<evidence type="ECO:0000255" key="5">
    <source>
        <dbReference type="PROSITE-ProRule" id="PRU00165"/>
    </source>
</evidence>
<evidence type="ECO:0000256" key="6">
    <source>
        <dbReference type="SAM" id="MobiDB-lite"/>
    </source>
</evidence>
<evidence type="ECO:0000303" key="7">
    <source>
    </source>
</evidence>
<evidence type="ECO:0000305" key="8"/>
<evidence type="ECO:0007744" key="9">
    <source>
    </source>
</evidence>
<protein>
    <recommendedName>
        <fullName>Signal-induced proliferation-associated 1-like protein 2</fullName>
        <shortName>SIPA1-like protein 2</shortName>
    </recommendedName>
</protein>
<comment type="alternative products">
    <event type="alternative splicing"/>
    <isoform>
        <id>Q80TE4-1</id>
        <name>1</name>
        <sequence type="displayed"/>
    </isoform>
    <isoform>
        <id>Q80TE4-2</id>
        <name>2</name>
        <sequence type="described" ref="VSP_016999"/>
    </isoform>
</comment>
<gene>
    <name type="primary">Sipa1l2</name>
    <name type="synonym">Kiaa0545</name>
</gene>
<accession>Q80TE4</accession>
<accession>E9QPK7</accession>
<accession>Q6PDY1</accession>
<dbReference type="EMBL" id="AC073946">
    <property type="status" value="NOT_ANNOTATED_CDS"/>
    <property type="molecule type" value="Genomic_DNA"/>
</dbReference>
<dbReference type="EMBL" id="BC058408">
    <property type="protein sequence ID" value="AAH58408.1"/>
    <property type="molecule type" value="mRNA"/>
</dbReference>
<dbReference type="EMBL" id="BC072593">
    <property type="status" value="NOT_ANNOTATED_CDS"/>
    <property type="molecule type" value="mRNA"/>
</dbReference>
<dbReference type="EMBL" id="AK122501">
    <property type="protein sequence ID" value="BAC65783.1"/>
    <property type="molecule type" value="mRNA"/>
</dbReference>
<dbReference type="CCDS" id="CCDS40518.1">
    <molecule id="Q80TE4-1"/>
</dbReference>
<dbReference type="RefSeq" id="NP_001074806.1">
    <molecule id="Q80TE4-1"/>
    <property type="nucleotide sequence ID" value="NM_001081337.2"/>
</dbReference>
<dbReference type="RefSeq" id="XP_006531087.1">
    <molecule id="Q80TE4-1"/>
    <property type="nucleotide sequence ID" value="XM_006531024.1"/>
</dbReference>
<dbReference type="RefSeq" id="XP_030099427.1">
    <molecule id="Q80TE4-1"/>
    <property type="nucleotide sequence ID" value="XM_030243567.2"/>
</dbReference>
<dbReference type="SMR" id="Q80TE4"/>
<dbReference type="BioGRID" id="232676">
    <property type="interactions" value="19"/>
</dbReference>
<dbReference type="FunCoup" id="Q80TE4">
    <property type="interactions" value="815"/>
</dbReference>
<dbReference type="IntAct" id="Q80TE4">
    <property type="interactions" value="1"/>
</dbReference>
<dbReference type="MINT" id="Q80TE4"/>
<dbReference type="STRING" id="10090.ENSMUSP00000148536"/>
<dbReference type="GlyGen" id="Q80TE4">
    <property type="glycosylation" value="7 sites, 2 N-linked glycans (2 sites), 1 O-linked glycan (3 sites)"/>
</dbReference>
<dbReference type="iPTMnet" id="Q80TE4"/>
<dbReference type="PhosphoSitePlus" id="Q80TE4"/>
<dbReference type="CPTAC" id="non-CPTAC-3497"/>
<dbReference type="PaxDb" id="10090-ENSMUSP00000104405"/>
<dbReference type="ProteomicsDB" id="261035">
    <molecule id="Q80TE4-1"/>
</dbReference>
<dbReference type="ProteomicsDB" id="261036">
    <molecule id="Q80TE4-2"/>
</dbReference>
<dbReference type="Pumba" id="Q80TE4"/>
<dbReference type="Antibodypedia" id="11728">
    <property type="antibodies" value="129 antibodies from 26 providers"/>
</dbReference>
<dbReference type="Ensembl" id="ENSMUST00000108775.2">
    <molecule id="Q80TE4-1"/>
    <property type="protein sequence ID" value="ENSMUSP00000104405.2"/>
    <property type="gene ID" value="ENSMUSG00000001995.10"/>
</dbReference>
<dbReference type="Ensembl" id="ENSMUST00000212987.2">
    <molecule id="Q80TE4-1"/>
    <property type="protein sequence ID" value="ENSMUSP00000148536.2"/>
    <property type="gene ID" value="ENSMUSG00000001995.10"/>
</dbReference>
<dbReference type="GeneID" id="244668"/>
<dbReference type="KEGG" id="mmu:244668"/>
<dbReference type="UCSC" id="uc009nye.1">
    <molecule id="Q80TE4-1"/>
    <property type="organism name" value="mouse"/>
</dbReference>
<dbReference type="AGR" id="MGI:2676970"/>
<dbReference type="CTD" id="57568"/>
<dbReference type="MGI" id="MGI:2676970">
    <property type="gene designation" value="Sipa1l2"/>
</dbReference>
<dbReference type="VEuPathDB" id="HostDB:ENSMUSG00000001995"/>
<dbReference type="eggNOG" id="KOG3686">
    <property type="taxonomic scope" value="Eukaryota"/>
</dbReference>
<dbReference type="GeneTree" id="ENSGT00940000157388"/>
<dbReference type="HOGENOM" id="CLU_002127_0_2_1"/>
<dbReference type="InParanoid" id="Q80TE4"/>
<dbReference type="OMA" id="GYRVDSY"/>
<dbReference type="OrthoDB" id="2499658at2759"/>
<dbReference type="PhylomeDB" id="Q80TE4"/>
<dbReference type="TreeFam" id="TF318626"/>
<dbReference type="BioGRID-ORCS" id="244668">
    <property type="hits" value="1 hit in 77 CRISPR screens"/>
</dbReference>
<dbReference type="ChiTaRS" id="Sipa1l2">
    <property type="organism name" value="mouse"/>
</dbReference>
<dbReference type="PRO" id="PR:Q80TE4"/>
<dbReference type="Proteomes" id="UP000000589">
    <property type="component" value="Chromosome 8"/>
</dbReference>
<dbReference type="RNAct" id="Q80TE4">
    <property type="molecule type" value="protein"/>
</dbReference>
<dbReference type="Bgee" id="ENSMUSG00000001995">
    <property type="expression patterns" value="Expressed in pontine nuclear group and 259 other cell types or tissues"/>
</dbReference>
<dbReference type="ExpressionAtlas" id="Q80TE4">
    <property type="expression patterns" value="baseline and differential"/>
</dbReference>
<dbReference type="GO" id="GO:0098978">
    <property type="term" value="C:glutamatergic synapse"/>
    <property type="evidence" value="ECO:0000314"/>
    <property type="project" value="SynGO"/>
</dbReference>
<dbReference type="GO" id="GO:0005096">
    <property type="term" value="F:GTPase activator activity"/>
    <property type="evidence" value="ECO:0007669"/>
    <property type="project" value="UniProtKB-KW"/>
</dbReference>
<dbReference type="GO" id="GO:0098928">
    <property type="term" value="P:presynaptic signal transduction"/>
    <property type="evidence" value="ECO:0000314"/>
    <property type="project" value="SynGO"/>
</dbReference>
<dbReference type="GO" id="GO:0051056">
    <property type="term" value="P:regulation of small GTPase mediated signal transduction"/>
    <property type="evidence" value="ECO:0007669"/>
    <property type="project" value="InterPro"/>
</dbReference>
<dbReference type="CDD" id="cd06745">
    <property type="entry name" value="PDZ_SIPA1-like"/>
    <property type="match status" value="1"/>
</dbReference>
<dbReference type="FunFam" id="3.40.50.11210:FF:000002">
    <property type="entry name" value="Signal-induced proliferation-associated 1-like protein 1"/>
    <property type="match status" value="1"/>
</dbReference>
<dbReference type="FunFam" id="2.30.42.10:FF:000027">
    <property type="entry name" value="Signal-induced proliferation-associated 1-like protein 1 isoform 2"/>
    <property type="match status" value="1"/>
</dbReference>
<dbReference type="Gene3D" id="2.30.42.10">
    <property type="match status" value="1"/>
</dbReference>
<dbReference type="Gene3D" id="6.10.140.210">
    <property type="match status" value="1"/>
</dbReference>
<dbReference type="Gene3D" id="3.40.50.11210">
    <property type="entry name" value="Rap/Ran-GAP"/>
    <property type="match status" value="1"/>
</dbReference>
<dbReference type="InterPro" id="IPR001478">
    <property type="entry name" value="PDZ"/>
</dbReference>
<dbReference type="InterPro" id="IPR036034">
    <property type="entry name" value="PDZ_sf"/>
</dbReference>
<dbReference type="InterPro" id="IPR035974">
    <property type="entry name" value="Rap/Ran-GAP_sf"/>
</dbReference>
<dbReference type="InterPro" id="IPR000331">
    <property type="entry name" value="Rap/Ran_GAP_dom"/>
</dbReference>
<dbReference type="InterPro" id="IPR050989">
    <property type="entry name" value="Rap1_Ran_GAP"/>
</dbReference>
<dbReference type="InterPro" id="IPR021818">
    <property type="entry name" value="SIPA1L_C"/>
</dbReference>
<dbReference type="PANTHER" id="PTHR15711">
    <property type="entry name" value="RAP GTPASE-ACTIVATING PROTEIN"/>
    <property type="match status" value="1"/>
</dbReference>
<dbReference type="PANTHER" id="PTHR15711:SF7">
    <property type="entry name" value="SIGNAL-INDUCED PROLIFERATION-ASSOCIATED 1-LIKE PROTEIN 2"/>
    <property type="match status" value="1"/>
</dbReference>
<dbReference type="Pfam" id="PF00595">
    <property type="entry name" value="PDZ"/>
    <property type="match status" value="1"/>
</dbReference>
<dbReference type="Pfam" id="PF21022">
    <property type="entry name" value="Rap-GAP_dimer"/>
    <property type="match status" value="1"/>
</dbReference>
<dbReference type="Pfam" id="PF02145">
    <property type="entry name" value="Rap_GAP"/>
    <property type="match status" value="1"/>
</dbReference>
<dbReference type="Pfam" id="PF11881">
    <property type="entry name" value="SPAR_C"/>
    <property type="match status" value="1"/>
</dbReference>
<dbReference type="SMART" id="SM00228">
    <property type="entry name" value="PDZ"/>
    <property type="match status" value="1"/>
</dbReference>
<dbReference type="SUPFAM" id="SSF50156">
    <property type="entry name" value="PDZ domain-like"/>
    <property type="match status" value="1"/>
</dbReference>
<dbReference type="SUPFAM" id="SSF111347">
    <property type="entry name" value="Rap/Ran-GAP"/>
    <property type="match status" value="1"/>
</dbReference>
<dbReference type="PROSITE" id="PS50106">
    <property type="entry name" value="PDZ"/>
    <property type="match status" value="1"/>
</dbReference>
<dbReference type="PROSITE" id="PS50085">
    <property type="entry name" value="RAPGAP"/>
    <property type="match status" value="1"/>
</dbReference>
<keyword id="KW-0025">Alternative splicing</keyword>
<keyword id="KW-0175">Coiled coil</keyword>
<keyword id="KW-0343">GTPase activation</keyword>
<keyword id="KW-0597">Phosphoprotein</keyword>
<keyword id="KW-1185">Reference proteome</keyword>